<organism>
    <name type="scientific">Treponema pallidum (strain Nichols)</name>
    <dbReference type="NCBI Taxonomy" id="243276"/>
    <lineage>
        <taxon>Bacteria</taxon>
        <taxon>Pseudomonadati</taxon>
        <taxon>Spirochaetota</taxon>
        <taxon>Spirochaetia</taxon>
        <taxon>Spirochaetales</taxon>
        <taxon>Treponemataceae</taxon>
        <taxon>Treponema</taxon>
    </lineage>
</organism>
<keyword id="KW-0472">Membrane</keyword>
<keyword id="KW-1185">Reference proteome</keyword>
<keyword id="KW-0812">Transmembrane</keyword>
<keyword id="KW-1133">Transmembrane helix</keyword>
<reference key="1">
    <citation type="journal article" date="1998" name="Science">
        <title>Complete genome sequence of Treponema pallidum, the syphilis spirochete.</title>
        <authorList>
            <person name="Fraser C.M."/>
            <person name="Norris S.J."/>
            <person name="Weinstock G.M."/>
            <person name="White O."/>
            <person name="Sutton G.G."/>
            <person name="Dodson R.J."/>
            <person name="Gwinn M.L."/>
            <person name="Hickey E.K."/>
            <person name="Clayton R.A."/>
            <person name="Ketchum K.A."/>
            <person name="Sodergren E."/>
            <person name="Hardham J.M."/>
            <person name="McLeod M.P."/>
            <person name="Salzberg S.L."/>
            <person name="Peterson J.D."/>
            <person name="Khalak H.G."/>
            <person name="Richardson D.L."/>
            <person name="Howell J.K."/>
            <person name="Chidambaram M."/>
            <person name="Utterback T.R."/>
            <person name="McDonald L.A."/>
            <person name="Artiach P."/>
            <person name="Bowman C."/>
            <person name="Cotton M.D."/>
            <person name="Fujii C."/>
            <person name="Garland S.A."/>
            <person name="Hatch B."/>
            <person name="Horst K."/>
            <person name="Roberts K.M."/>
            <person name="Sandusky M."/>
            <person name="Weidman J.F."/>
            <person name="Smith H.O."/>
            <person name="Venter J.C."/>
        </authorList>
    </citation>
    <scope>NUCLEOTIDE SEQUENCE [LARGE SCALE GENOMIC DNA]</scope>
    <source>
        <strain>Nichols</strain>
    </source>
</reference>
<accession>O83709</accession>
<evidence type="ECO:0000255" key="1"/>
<evidence type="ECO:0000256" key="2">
    <source>
        <dbReference type="SAM" id="MobiDB-lite"/>
    </source>
</evidence>
<evidence type="ECO:0000305" key="3"/>
<dbReference type="EMBL" id="AE000520">
    <property type="protein sequence ID" value="AAC65677.1"/>
    <property type="molecule type" value="Genomic_DNA"/>
</dbReference>
<dbReference type="PIR" id="C71290">
    <property type="entry name" value="C71290"/>
</dbReference>
<dbReference type="RefSeq" id="WP_010882156.1">
    <property type="nucleotide sequence ID" value="NC_021490.2"/>
</dbReference>
<dbReference type="IntAct" id="O83709">
    <property type="interactions" value="47"/>
</dbReference>
<dbReference type="STRING" id="243276.TP_0711"/>
<dbReference type="EnsemblBacteria" id="AAC65677">
    <property type="protein sequence ID" value="AAC65677"/>
    <property type="gene ID" value="TP_0711"/>
</dbReference>
<dbReference type="KEGG" id="tpa:TP_0711"/>
<dbReference type="KEGG" id="tpw:TPANIC_0711"/>
<dbReference type="eggNOG" id="ENOG5032NXZ">
    <property type="taxonomic scope" value="Bacteria"/>
</dbReference>
<dbReference type="HOGENOM" id="CLU_122426_0_0_12"/>
<dbReference type="Proteomes" id="UP000000811">
    <property type="component" value="Chromosome"/>
</dbReference>
<dbReference type="GO" id="GO:0016020">
    <property type="term" value="C:membrane"/>
    <property type="evidence" value="ECO:0007669"/>
    <property type="project" value="UniProtKB-SubCell"/>
</dbReference>
<comment type="subcellular location">
    <subcellularLocation>
        <location evidence="3">Membrane</location>
        <topology evidence="3">Single-pass membrane protein</topology>
    </subcellularLocation>
</comment>
<comment type="similarity">
    <text evidence="3">To B.burgdorferi BB0265.</text>
</comment>
<proteinExistence type="predicted"/>
<name>Y711_TREPA</name>
<gene>
    <name type="ordered locus">TP_0711</name>
</gene>
<feature type="chain" id="PRO_0000202310" description="Uncharacterized protein TP_0711">
    <location>
        <begin position="1"/>
        <end position="190"/>
    </location>
</feature>
<feature type="transmembrane region" description="Helical" evidence="1">
    <location>
        <begin position="1"/>
        <end position="21"/>
    </location>
</feature>
<feature type="region of interest" description="Disordered" evidence="2">
    <location>
        <begin position="103"/>
        <end position="130"/>
    </location>
</feature>
<feature type="compositionally biased region" description="Basic and acidic residues" evidence="2">
    <location>
        <begin position="103"/>
        <end position="114"/>
    </location>
</feature>
<sequence>MLVMSITFSFVAVALLVYFYVKVRTSFSPDAYAKTMQQEVIKMIRDIRYEADIAVQMLEKKIGECNQVVRTIDRKLTLLNEEILKEHTARTLFRASGAGQETREEVCARPEHRSAPSRAGSSAAKPTPTKRGTIEVYNEKIIRDNGLRAESPLLKDAIIALSEKGLAPEFIAEKTGKPLGEVQLLINLSR</sequence>
<protein>
    <recommendedName>
        <fullName>Uncharacterized protein TP_0711</fullName>
    </recommendedName>
</protein>